<protein>
    <recommendedName>
        <fullName>Epoxide hydrolase LasB</fullName>
        <ecNumber>5.5.1.-</ecNumber>
    </recommendedName>
    <alternativeName>
        <fullName>Lasalocid biosynthesis protein Lsd19</fullName>
    </alternativeName>
</protein>
<dbReference type="EC" id="5.5.1.-"/>
<dbReference type="EMBL" id="FM173265">
    <property type="protein sequence ID" value="CAQ64695.1"/>
    <property type="molecule type" value="Genomic_DNA"/>
</dbReference>
<dbReference type="EMBL" id="AB449340">
    <property type="protein sequence ID" value="BAG85034.1"/>
    <property type="molecule type" value="Genomic_DNA"/>
</dbReference>
<dbReference type="PDB" id="3RGA">
    <property type="method" value="X-ray"/>
    <property type="resolution" value="1.59 A"/>
    <property type="chains" value="A=1-282"/>
</dbReference>
<dbReference type="PDB" id="4RZM">
    <property type="method" value="X-ray"/>
    <property type="resolution" value="2.33 A"/>
    <property type="chains" value="A/B=1-280"/>
</dbReference>
<dbReference type="PDBsum" id="3RGA"/>
<dbReference type="PDBsum" id="4RZM"/>
<dbReference type="SMR" id="B6ZK72"/>
<dbReference type="EvolutionaryTrace" id="B6ZK72"/>
<dbReference type="GO" id="GO:0016853">
    <property type="term" value="F:isomerase activity"/>
    <property type="evidence" value="ECO:0007669"/>
    <property type="project" value="UniProtKB-KW"/>
</dbReference>
<dbReference type="GO" id="GO:0017000">
    <property type="term" value="P:antibiotic biosynthetic process"/>
    <property type="evidence" value="ECO:0007669"/>
    <property type="project" value="UniProtKB-KW"/>
</dbReference>
<dbReference type="Gene3D" id="3.10.450.50">
    <property type="match status" value="2"/>
</dbReference>
<dbReference type="InterPro" id="IPR032710">
    <property type="entry name" value="NTF2-like_dom_sf"/>
</dbReference>
<dbReference type="InterPro" id="IPR037401">
    <property type="entry name" value="SnoaL-like"/>
</dbReference>
<dbReference type="Pfam" id="PF12680">
    <property type="entry name" value="SnoaL_2"/>
    <property type="match status" value="2"/>
</dbReference>
<dbReference type="SUPFAM" id="SSF54427">
    <property type="entry name" value="NTF2-like"/>
    <property type="match status" value="2"/>
</dbReference>
<organism>
    <name type="scientific">Streptomyces lasalocidi</name>
    <name type="common">Streptomyces lasaliensis</name>
    <dbReference type="NCBI Taxonomy" id="324833"/>
    <lineage>
        <taxon>Bacteria</taxon>
        <taxon>Bacillati</taxon>
        <taxon>Actinomycetota</taxon>
        <taxon>Actinomycetes</taxon>
        <taxon>Kitasatosporales</taxon>
        <taxon>Streptomycetaceae</taxon>
        <taxon>Streptomyces</taxon>
    </lineage>
</organism>
<feature type="chain" id="PRO_0000417070" description="Epoxide hydrolase LasB">
    <location>
        <begin position="1"/>
        <end position="282"/>
    </location>
</feature>
<feature type="region of interest" description="Lsd19A">
    <location>
        <begin position="1"/>
        <end position="133"/>
    </location>
</feature>
<feature type="region of interest" description="Lsd19B">
    <location>
        <begin position="134"/>
        <end position="282"/>
    </location>
</feature>
<feature type="active site" description="Proton acceptor; for 5-exo epoxide-opening cyclization activity" evidence="5">
    <location>
        <position position="38"/>
    </location>
</feature>
<feature type="active site" description="Proton acceptor; for 6-endo epoxide-opening cyclization activity" evidence="5">
    <location>
        <position position="170"/>
    </location>
</feature>
<feature type="binding site" evidence="5">
    <location>
        <position position="14"/>
    </location>
    <ligand>
        <name>substrate</name>
    </ligand>
</feature>
<feature type="binding site" evidence="5">
    <location>
        <position position="65"/>
    </location>
    <ligand>
        <name>substrate</name>
    </ligand>
</feature>
<feature type="binding site" evidence="5">
    <location>
        <position position="146"/>
    </location>
    <ligand>
        <name>substrate</name>
    </ligand>
</feature>
<feature type="binding site" evidence="5">
    <location>
        <position position="177"/>
    </location>
    <ligand>
        <name>substrate</name>
    </ligand>
</feature>
<feature type="binding site" evidence="5">
    <location>
        <position position="197"/>
    </location>
    <ligand>
        <name>substrate</name>
    </ligand>
</feature>
<feature type="binding site" evidence="5">
    <location>
        <position position="251"/>
    </location>
    <ligand>
        <name>substrate</name>
    </ligand>
</feature>
<feature type="site" description="Raises pKa of active site Asp-38">
    <location>
        <position position="54"/>
    </location>
</feature>
<feature type="site" description="Raises pKa of active site Asp-170">
    <location>
        <position position="186"/>
    </location>
</feature>
<feature type="mutagenesis site" description="Loss of both epoxide-opening activities; when associated with A-197." evidence="4">
    <original>D</original>
    <variation>A</variation>
    <location>
        <position position="38"/>
    </location>
</feature>
<feature type="mutagenesis site" description="Loss of both epoxide-opening activities; when associated with A-197." evidence="4">
    <original>E</original>
    <variation>A</variation>
    <location>
        <position position="65"/>
    </location>
</feature>
<feature type="mutagenesis site" description="Retains the 5-exo epoxide-opening activity but loses the 6-endo epoxide-opening activity." evidence="4">
    <original>D</original>
    <variation>A</variation>
    <location>
        <position position="170"/>
    </location>
</feature>
<feature type="mutagenesis site" description="Retains the 5-exo epoxide-opening activity but loses the 6-endo epoxide-opening activity. Loss of both epoxide-opening activities; when associated with A-38 or with A-65." evidence="4">
    <original>E</original>
    <variation>A</variation>
    <location>
        <position position="197"/>
    </location>
</feature>
<feature type="sequence conflict" description="In Ref. 1; CAQ64695." evidence="6" ref="1">
    <original>L</original>
    <variation>R</variation>
    <location>
        <position position="35"/>
    </location>
</feature>
<feature type="helix" evidence="7">
    <location>
        <begin position="4"/>
        <end position="20"/>
    </location>
</feature>
<feature type="helix" evidence="7">
    <location>
        <begin position="23"/>
        <end position="28"/>
    </location>
</feature>
<feature type="strand" evidence="7">
    <location>
        <begin position="30"/>
        <end position="37"/>
    </location>
</feature>
<feature type="strand" evidence="7">
    <location>
        <begin position="39"/>
        <end position="42"/>
    </location>
</feature>
<feature type="strand" evidence="7">
    <location>
        <begin position="45"/>
        <end position="47"/>
    </location>
</feature>
<feature type="helix" evidence="7">
    <location>
        <begin position="48"/>
        <end position="60"/>
    </location>
</feature>
<feature type="strand" evidence="7">
    <location>
        <begin position="64"/>
        <end position="67"/>
    </location>
</feature>
<feature type="strand" evidence="7">
    <location>
        <begin position="74"/>
        <end position="87"/>
    </location>
</feature>
<feature type="helix" evidence="7">
    <location>
        <begin position="94"/>
        <end position="96"/>
    </location>
</feature>
<feature type="strand" evidence="7">
    <location>
        <begin position="98"/>
        <end position="108"/>
    </location>
</feature>
<feature type="strand" evidence="7">
    <location>
        <begin position="114"/>
        <end position="120"/>
    </location>
</feature>
<feature type="helix" evidence="7">
    <location>
        <begin position="123"/>
        <end position="125"/>
    </location>
</feature>
<feature type="helix" evidence="7">
    <location>
        <begin position="134"/>
        <end position="151"/>
    </location>
</feature>
<feature type="helix" evidence="7">
    <location>
        <begin position="155"/>
        <end position="159"/>
    </location>
</feature>
<feature type="strand" evidence="7">
    <location>
        <begin position="162"/>
        <end position="171"/>
    </location>
</feature>
<feature type="strand" evidence="7">
    <location>
        <begin position="176"/>
        <end position="179"/>
    </location>
</feature>
<feature type="helix" evidence="7">
    <location>
        <begin position="180"/>
        <end position="192"/>
    </location>
</feature>
<feature type="strand" evidence="7">
    <location>
        <begin position="196"/>
        <end position="204"/>
    </location>
</feature>
<feature type="strand" evidence="7">
    <location>
        <begin position="208"/>
        <end position="221"/>
    </location>
</feature>
<feature type="helix" evidence="7">
    <location>
        <begin position="224"/>
        <end position="230"/>
    </location>
</feature>
<feature type="turn" evidence="7">
    <location>
        <begin position="242"/>
        <end position="244"/>
    </location>
</feature>
<feature type="strand" evidence="7">
    <location>
        <begin position="246"/>
        <end position="257"/>
    </location>
</feature>
<feature type="strand" evidence="7">
    <location>
        <begin position="263"/>
        <end position="269"/>
    </location>
</feature>
<feature type="helix" evidence="7">
    <location>
        <begin position="272"/>
        <end position="274"/>
    </location>
</feature>
<feature type="strand" evidence="7">
    <location>
        <begin position="275"/>
        <end position="278"/>
    </location>
</feature>
<reference key="1">
    <citation type="journal article" date="2008" name="ChemBioChem">
        <title>Analysis of specific mutants in the lasalocid gene cluster: evidence for enzymatic catalysis of a disfavoured polyether ring closure.</title>
        <authorList>
            <person name="Smith L."/>
            <person name="Hong H."/>
            <person name="Spencer J.B."/>
            <person name="Leadlay P.F."/>
        </authorList>
    </citation>
    <scope>NUCLEOTIDE SEQUENCE [GENOMIC DNA]</scope>
    <scope>FUNCTION IN LASALOCID BIOSYNTHESIS</scope>
    <scope>DISRUPTION PHENOTYPE</scope>
    <source>
        <strain>ATCC 35851 / NRRL 3382R</strain>
    </source>
</reference>
<reference key="2">
    <citation type="journal article" date="2009" name="Biosci. Biotechnol. Biochem.">
        <title>Identification of a gene cluster of polyether antibiotic lasalocid from Streptomyces lasaliensis.</title>
        <authorList>
            <person name="Migita A."/>
            <person name="Watanabe M."/>
            <person name="Hirose Y."/>
            <person name="Watanabe K."/>
            <person name="Tokiwano T."/>
            <person name="Kinashi H."/>
            <person name="Oikawa H."/>
        </authorList>
    </citation>
    <scope>NUCLEOTIDE SEQUENCE [GENOMIC DNA]</scope>
    <source>
        <strain>ATCC 35851 / NRRL 3382R</strain>
        <plasmid>pKSL</plasmid>
    </source>
</reference>
<reference key="3">
    <citation type="journal article" date="2008" name="J. Am. Chem. Soc.">
        <title>Epoxide hydrolase Lsd19 for polyether formation in the biosynthesis of lasalocid A: direct experimental evidence on polyene-polyepoxide hypothesis in polyether biosynthesis.</title>
        <authorList>
            <person name="Shichijo Y."/>
            <person name="Migita A."/>
            <person name="Oguri H."/>
            <person name="Watanabe M."/>
            <person name="Tokiwano T."/>
            <person name="Watanabe K."/>
            <person name="Oikawa H."/>
        </authorList>
    </citation>
    <scope>FUNCTION AS AN EPOXIDE HYDROLASE</scope>
    <scope>CATALYTIC ACTIVITY</scope>
    <source>
        <strain>ATCC 35851 / NRRL 3382R</strain>
        <plasmid>pKSL</plasmid>
    </source>
</reference>
<reference key="4">
    <citation type="journal article" date="2010" name="Org. Lett.">
        <title>Intriguing substrate tolerance of epoxide hydrolase Lsd19 involved in biosynthesis of the ionophore antibiotic lasalocid A.</title>
        <authorList>
            <person name="Matsuura Y."/>
            <person name="Shichijo Y."/>
            <person name="Minami A."/>
            <person name="Migita A."/>
            <person name="Oguri H."/>
            <person name="Watanabe M."/>
            <person name="Tokiwano T."/>
            <person name="Watanabe K."/>
            <person name="Oikawa H."/>
        </authorList>
    </citation>
    <scope>FUNCTION</scope>
    <scope>SUBSTRATE SPECIFICITY</scope>
</reference>
<reference key="5">
    <citation type="journal article" date="2011" name="Org. Lett.">
        <title>Enzymatic epoxide-opening cascades catalyzed by a pair of epoxide hydrolases in the ionophore polyether biosynthesis.</title>
        <authorList>
            <person name="Minami A."/>
            <person name="Migita A."/>
            <person name="Inada D."/>
            <person name="Hotta K."/>
            <person name="Watanabe K."/>
            <person name="Oguri H."/>
            <person name="Oikawa H."/>
        </authorList>
    </citation>
    <scope>FUNCTION</scope>
    <scope>CATALYTIC ACTIVITY</scope>
    <scope>REACTION MECHANISM</scope>
    <scope>DOMAIN</scope>
    <scope>MUTAGENESIS OF ASP-38; GLU-65; ASP-170 AND GLU-197</scope>
</reference>
<reference key="6">
    <citation type="journal article" date="2012" name="Nature">
        <title>Enzymatic catalysis of anti-Baldwin ring closure in polyether biosynthesis.</title>
        <authorList>
            <person name="Hotta K."/>
            <person name="Chen X."/>
            <person name="Paton R.S."/>
            <person name="Minami A."/>
            <person name="Li H."/>
            <person name="Swaminathan K."/>
            <person name="Mathews I.I."/>
            <person name="Watanabe K."/>
            <person name="Oikawa H."/>
            <person name="Houk K.N."/>
            <person name="Kim C.Y."/>
        </authorList>
    </citation>
    <scope>X-RAY CRYSTALLOGRAPHY (1.59 ANGSTROMS) IN COMPLEX WITH SUBSTRATE AND PRODUCT ANALOG</scope>
    <scope>DOMAIN</scope>
    <scope>REACTION MECHANISM</scope>
    <scope>ACTIVE SITES</scope>
</reference>
<accession>B6ZK72</accession>
<accession>B5M9L7</accession>
<evidence type="ECO:0000269" key="1">
    <source>
    </source>
</evidence>
<evidence type="ECO:0000269" key="2">
    <source>
    </source>
</evidence>
<evidence type="ECO:0000269" key="3">
    <source>
    </source>
</evidence>
<evidence type="ECO:0000269" key="4">
    <source>
    </source>
</evidence>
<evidence type="ECO:0000269" key="5">
    <source>
    </source>
</evidence>
<evidence type="ECO:0000305" key="6"/>
<evidence type="ECO:0007829" key="7">
    <source>
        <dbReference type="PDB" id="3RGA"/>
    </source>
</evidence>
<sequence length="282" mass="30249">MPAETVRKEVALEYCRRVNAGELEGVLQLFAPDALLVDPLGTEPVVGRAALAARLAPALRGAVHEEPGRPYAAHDGTSVVLPATVTVGAPGAPPQRRGRTRVMGVIEVGEDGLIREMRVMWGVTDSSWTARPAPDEERRKELAREHCLRINDGDVDGLLKLYSPRIRFEDPVGSWTRTGLEALRAHATMAVGSNVRETAGLTVAGQDGRHAAVTVSATMDYLPSGPLLARHHLMTLPAPADPHRALIGIEYVMVIGVDADGLIDEMRAYWGATDVSLLDPAA</sequence>
<gene>
    <name type="primary">lsd19</name>
    <name type="synonym">lasB</name>
</gene>
<geneLocation type="plasmid">
    <name>pKSL</name>
</geneLocation>
<comment type="function">
    <text evidence="1 2 3 4">Epoxide hydrolase responsible for the double epoxide-opening cyclization of bisepoxyprelasalocid A to form lasalocid A, a polyether antibiotic. In vitro, accepts various substrate analogs differing in the left segment of lasalocid and epoxide stereochemistry to afford products with excellent regioselectivity.</text>
</comment>
<comment type="domain">
    <text evidence="4 5">Consists of two highly homologous domains, oriented in a head-to-tail fashion, that catalyze epoxide-opening cascades independently in lasalocid biosynthesis. The N-terminal domain (Lsd19A) recognizes the internal C18-C19 epoxide of the substrate and catalyzes energetically favored 5-exo cyclization, while the C-terminal domain (Lsd19B) recognizes the internal C22-C23 epoxide of the substrate and predominantly catalyzes energetically disfavored 6-endo cyclization.</text>
</comment>
<comment type="disruption phenotype">
    <text evidence="2">Cells lacking this gene do not produce lasalocid, they only produce iso-lasalocid.</text>
</comment>
<proteinExistence type="evidence at protein level"/>
<keyword id="KW-0002">3D-structure</keyword>
<keyword id="KW-0045">Antibiotic biosynthesis</keyword>
<keyword id="KW-0413">Isomerase</keyword>
<keyword id="KW-0614">Plasmid</keyword>
<name>LSD19_STRLS</name>